<sequence>MFTVTPAKIYLNQEKTPVSEQFNDVYFSNQDGLAESEYVFQQGNHLWERWIVYQEKHFVIAETGFGTGLNFLAVTSLFRQFRQQYSHSPLKHLFFISFEKYPLPKVQLQQIHQFYPQFSALSQQLCDYCLEAIQGCQRFHFAETTLDLWFGDIVDNLPQLGDYMQNRIDAWFLDGFSPSKNPQMWNDELYQQMFYYSKPQGTFSTFTAASAVRKGLVSAGFEVQKRKGYGKKRECLCGIKNAIPQQNTKAPWYLSQPASLLSEDIAIIGGGIASLFTALSLLKRGAKITLYCEDEQLALNASGNKQGAFYPQLSDDDDRNIRFYVHAFFYALQQLQWAIKQGIEFEHEFCGVALCAYDHKSAVKLAKISSYQWSKSLYQNLNKEQLSEKIGLPLDCAGGFIPQGGWLAPRQFVQNTFSYLQQLGLEIKTSQKITALDYRNLQWVLTNEQNETFNHQVVVLANGYQITDFVQTAKLPLYPVRGQVSQIPTSANLLKLKSVLCYDGYLTPADKMKQSHCLGASHIRNNKDRHFSHQEQRENQQKIQQNLASTDTDKNMDWLQDIDISANIARIGVRCSVRDRVPIMGNVPHFEQQCLDYRNIFNLRRRKQPIPDAAQWKNLYLIGALGSRGLTSAALLGETLASLIYAEPLPLSEDILHNLSPNRSWIRKLLKGTEIK</sequence>
<keyword id="KW-0963">Cytoplasm</keyword>
<keyword id="KW-0274">FAD</keyword>
<keyword id="KW-0285">Flavoprotein</keyword>
<keyword id="KW-0489">Methyltransferase</keyword>
<keyword id="KW-0511">Multifunctional enzyme</keyword>
<keyword id="KW-0560">Oxidoreductase</keyword>
<keyword id="KW-0949">S-adenosyl-L-methionine</keyword>
<keyword id="KW-0808">Transferase</keyword>
<keyword id="KW-0819">tRNA processing</keyword>
<gene>
    <name evidence="1" type="primary">mnmC</name>
    <name type="ordered locus">HSM_1004</name>
</gene>
<accession>B0UT85</accession>
<feature type="chain" id="PRO_0000347986" description="tRNA 5-methylaminomethyl-2-thiouridine biosynthesis bifunctional protein MnmC">
    <location>
        <begin position="1"/>
        <end position="676"/>
    </location>
</feature>
<feature type="region of interest" description="tRNA (mnm(5)s(2)U34)-methyltransferase">
    <location>
        <begin position="1"/>
        <end position="241"/>
    </location>
</feature>
<feature type="region of interest" description="FAD-dependent cmnm(5)s(2)U34 oxidoreductase">
    <location>
        <begin position="268"/>
        <end position="676"/>
    </location>
</feature>
<reference key="1">
    <citation type="submission" date="2008-02" db="EMBL/GenBank/DDBJ databases">
        <title>Complete sequence of Haemophilus somnus 2336.</title>
        <authorList>
            <consortium name="US DOE Joint Genome Institute"/>
            <person name="Siddaramappa S."/>
            <person name="Duncan A.J."/>
            <person name="Challacombe J.F."/>
            <person name="Rainey D."/>
            <person name="Gillaspy A.F."/>
            <person name="Carson M."/>
            <person name="Gipson J."/>
            <person name="Gipson M."/>
            <person name="Bruce D."/>
            <person name="Detter J.C."/>
            <person name="Han C.S."/>
            <person name="Land M."/>
            <person name="Tapia R."/>
            <person name="Thompson L.S."/>
            <person name="Orvis J."/>
            <person name="Zaitshik J."/>
            <person name="Barnes G."/>
            <person name="Brettin T.S."/>
            <person name="Dyer D.W."/>
            <person name="Inzana T.J."/>
        </authorList>
    </citation>
    <scope>NUCLEOTIDE SEQUENCE [LARGE SCALE GENOMIC DNA]</scope>
    <source>
        <strain>2336</strain>
    </source>
</reference>
<proteinExistence type="inferred from homology"/>
<evidence type="ECO:0000255" key="1">
    <source>
        <dbReference type="HAMAP-Rule" id="MF_01102"/>
    </source>
</evidence>
<dbReference type="EC" id="2.1.1.61" evidence="1"/>
<dbReference type="EC" id="1.5.-.-" evidence="1"/>
<dbReference type="EMBL" id="CP000947">
    <property type="protein sequence ID" value="ACA30714.1"/>
    <property type="molecule type" value="Genomic_DNA"/>
</dbReference>
<dbReference type="RefSeq" id="WP_012340203.1">
    <property type="nucleotide sequence ID" value="NC_010519.1"/>
</dbReference>
<dbReference type="SMR" id="B0UT85"/>
<dbReference type="STRING" id="228400.HSM_1004"/>
<dbReference type="GeneID" id="31487302"/>
<dbReference type="KEGG" id="hsm:HSM_1004"/>
<dbReference type="HOGENOM" id="CLU_022427_2_1_6"/>
<dbReference type="GO" id="GO:0005737">
    <property type="term" value="C:cytoplasm"/>
    <property type="evidence" value="ECO:0007669"/>
    <property type="project" value="UniProtKB-SubCell"/>
</dbReference>
<dbReference type="GO" id="GO:0050660">
    <property type="term" value="F:flavin adenine dinucleotide binding"/>
    <property type="evidence" value="ECO:0007669"/>
    <property type="project" value="UniProtKB-UniRule"/>
</dbReference>
<dbReference type="GO" id="GO:0016645">
    <property type="term" value="F:oxidoreductase activity, acting on the CH-NH group of donors"/>
    <property type="evidence" value="ECO:0007669"/>
    <property type="project" value="InterPro"/>
</dbReference>
<dbReference type="GO" id="GO:0004808">
    <property type="term" value="F:tRNA (5-methylaminomethyl-2-thiouridylate)(34)-methyltransferase activity"/>
    <property type="evidence" value="ECO:0007669"/>
    <property type="project" value="UniProtKB-EC"/>
</dbReference>
<dbReference type="GO" id="GO:0032259">
    <property type="term" value="P:methylation"/>
    <property type="evidence" value="ECO:0007669"/>
    <property type="project" value="UniProtKB-KW"/>
</dbReference>
<dbReference type="GO" id="GO:0002098">
    <property type="term" value="P:tRNA wobble uridine modification"/>
    <property type="evidence" value="ECO:0007669"/>
    <property type="project" value="TreeGrafter"/>
</dbReference>
<dbReference type="Gene3D" id="3.30.9.10">
    <property type="entry name" value="D-Amino Acid Oxidase, subunit A, domain 2"/>
    <property type="match status" value="1"/>
</dbReference>
<dbReference type="Gene3D" id="3.50.50.60">
    <property type="entry name" value="FAD/NAD(P)-binding domain"/>
    <property type="match status" value="1"/>
</dbReference>
<dbReference type="Gene3D" id="3.40.50.150">
    <property type="entry name" value="Vaccinia Virus protein VP39"/>
    <property type="match status" value="1"/>
</dbReference>
<dbReference type="HAMAP" id="MF_01102">
    <property type="entry name" value="MnmC"/>
    <property type="match status" value="1"/>
</dbReference>
<dbReference type="InterPro" id="IPR006076">
    <property type="entry name" value="FAD-dep_OxRdtase"/>
</dbReference>
<dbReference type="InterPro" id="IPR036188">
    <property type="entry name" value="FAD/NAD-bd_sf"/>
</dbReference>
<dbReference type="InterPro" id="IPR008471">
    <property type="entry name" value="MnmC-like_methylTransf"/>
</dbReference>
<dbReference type="InterPro" id="IPR029063">
    <property type="entry name" value="SAM-dependent_MTases_sf"/>
</dbReference>
<dbReference type="InterPro" id="IPR023032">
    <property type="entry name" value="tRNA_MAMT_biosynth_bifunc_MnmC"/>
</dbReference>
<dbReference type="InterPro" id="IPR047785">
    <property type="entry name" value="tRNA_MNMC2"/>
</dbReference>
<dbReference type="InterPro" id="IPR017610">
    <property type="entry name" value="tRNA_S-uridine_synth_MnmC_C"/>
</dbReference>
<dbReference type="NCBIfam" id="TIGR03197">
    <property type="entry name" value="MnmC_Cterm"/>
    <property type="match status" value="1"/>
</dbReference>
<dbReference type="NCBIfam" id="NF002481">
    <property type="entry name" value="PRK01747.1-2"/>
    <property type="match status" value="1"/>
</dbReference>
<dbReference type="NCBIfam" id="NF002484">
    <property type="entry name" value="PRK01747.1-5"/>
    <property type="match status" value="1"/>
</dbReference>
<dbReference type="NCBIfam" id="NF033855">
    <property type="entry name" value="tRNA_MNMC2"/>
    <property type="match status" value="1"/>
</dbReference>
<dbReference type="PANTHER" id="PTHR13847">
    <property type="entry name" value="SARCOSINE DEHYDROGENASE-RELATED"/>
    <property type="match status" value="1"/>
</dbReference>
<dbReference type="PANTHER" id="PTHR13847:SF283">
    <property type="entry name" value="TRNA 5-METHYLAMINOMETHYL-2-THIOURIDINE BIOSYNTHESIS BIFUNCTIONAL PROTEIN MNMC"/>
    <property type="match status" value="1"/>
</dbReference>
<dbReference type="Pfam" id="PF01266">
    <property type="entry name" value="DAO"/>
    <property type="match status" value="1"/>
</dbReference>
<dbReference type="Pfam" id="PF05430">
    <property type="entry name" value="Methyltransf_30"/>
    <property type="match status" value="1"/>
</dbReference>
<dbReference type="SUPFAM" id="SSF51905">
    <property type="entry name" value="FAD/NAD(P)-binding domain"/>
    <property type="match status" value="1"/>
</dbReference>
<organism>
    <name type="scientific">Histophilus somni (strain 2336)</name>
    <name type="common">Haemophilus somnus</name>
    <dbReference type="NCBI Taxonomy" id="228400"/>
    <lineage>
        <taxon>Bacteria</taxon>
        <taxon>Pseudomonadati</taxon>
        <taxon>Pseudomonadota</taxon>
        <taxon>Gammaproteobacteria</taxon>
        <taxon>Pasteurellales</taxon>
        <taxon>Pasteurellaceae</taxon>
        <taxon>Histophilus</taxon>
    </lineage>
</organism>
<protein>
    <recommendedName>
        <fullName evidence="1">tRNA 5-methylaminomethyl-2-thiouridine biosynthesis bifunctional protein MnmC</fullName>
        <shortName evidence="1">tRNA mnm(5)s(2)U biosynthesis bifunctional protein</shortName>
    </recommendedName>
    <domain>
        <recommendedName>
            <fullName evidence="1">tRNA (mnm(5)s(2)U34)-methyltransferase</fullName>
            <ecNumber evidence="1">2.1.1.61</ecNumber>
        </recommendedName>
    </domain>
    <domain>
        <recommendedName>
            <fullName evidence="1">FAD-dependent cmnm(5)s(2)U34 oxidoreductase</fullName>
            <ecNumber evidence="1">1.5.-.-</ecNumber>
        </recommendedName>
    </domain>
</protein>
<comment type="function">
    <text evidence="1">Catalyzes the last two steps in the biosynthesis of 5-methylaminomethyl-2-thiouridine (mnm(5)s(2)U) at the wobble position (U34) in tRNA. Catalyzes the FAD-dependent demodification of cmnm(5)s(2)U34 to nm(5)s(2)U34, followed by the transfer of a methyl group from S-adenosyl-L-methionine to nm(5)s(2)U34, to form mnm(5)s(2)U34.</text>
</comment>
<comment type="catalytic activity">
    <reaction evidence="1">
        <text>5-aminomethyl-2-thiouridine(34) in tRNA + S-adenosyl-L-methionine = 5-methylaminomethyl-2-thiouridine(34) in tRNA + S-adenosyl-L-homocysteine + H(+)</text>
        <dbReference type="Rhea" id="RHEA:19569"/>
        <dbReference type="Rhea" id="RHEA-COMP:10195"/>
        <dbReference type="Rhea" id="RHEA-COMP:10197"/>
        <dbReference type="ChEBI" id="CHEBI:15378"/>
        <dbReference type="ChEBI" id="CHEBI:57856"/>
        <dbReference type="ChEBI" id="CHEBI:59789"/>
        <dbReference type="ChEBI" id="CHEBI:74454"/>
        <dbReference type="ChEBI" id="CHEBI:74455"/>
        <dbReference type="EC" id="2.1.1.61"/>
    </reaction>
</comment>
<comment type="cofactor">
    <cofactor evidence="1">
        <name>FAD</name>
        <dbReference type="ChEBI" id="CHEBI:57692"/>
    </cofactor>
</comment>
<comment type="subcellular location">
    <subcellularLocation>
        <location evidence="1">Cytoplasm</location>
    </subcellularLocation>
</comment>
<comment type="similarity">
    <text evidence="1">In the N-terminal section; belongs to the methyltransferase superfamily. tRNA (mnm(5)s(2)U34)-methyltransferase family.</text>
</comment>
<comment type="similarity">
    <text evidence="1">In the C-terminal section; belongs to the DAO family.</text>
</comment>
<name>MNMC_HISS2</name>